<protein>
    <recommendedName>
        <fullName>TOX high mobility group box family member 4</fullName>
    </recommendedName>
</protein>
<keyword id="KW-0158">Chromosome</keyword>
<keyword id="KW-0238">DNA-binding</keyword>
<keyword id="KW-0539">Nucleus</keyword>
<keyword id="KW-0597">Phosphoprotein</keyword>
<keyword id="KW-1185">Reference proteome</keyword>
<feature type="chain" id="PRO_0000364352" description="TOX high mobility group box family member 4">
    <location>
        <begin position="1"/>
        <end position="597"/>
    </location>
</feature>
<feature type="DNA-binding region" description="HMG box" evidence="4">
    <location>
        <begin position="222"/>
        <end position="290"/>
    </location>
</feature>
<feature type="region of interest" description="Disordered" evidence="5">
    <location>
        <begin position="160"/>
        <end position="224"/>
    </location>
</feature>
<feature type="region of interest" description="Disordered" evidence="5">
    <location>
        <begin position="520"/>
        <end position="546"/>
    </location>
</feature>
<feature type="short sequence motif" description="Nuclear localization signal" evidence="3">
    <location>
        <begin position="212"/>
        <end position="217"/>
    </location>
</feature>
<feature type="compositionally biased region" description="Basic residues" evidence="5">
    <location>
        <begin position="207"/>
        <end position="217"/>
    </location>
</feature>
<comment type="function">
    <text evidence="1 2">Transcription factor that modulates cell fate reprogramming from the somatic state to the pluripotent and neuronal fate. Also acts as a regulatory component of protein phosphatase 1 (PP1) complexes. Component of the PNUTS-PP1 protein phosphatase complex, a PP1 complex that regulates RNA polymerase II transcription pause-release (By similarity). PNUTS-PP1 also plays a role in the control of chromatin structure and cell cycle progression during the transition from mitosis into interphase (By similarity).</text>
</comment>
<comment type="subunit">
    <text evidence="2">Component of the PNUTS-PP1 phosphatase complex.</text>
</comment>
<comment type="subcellular location">
    <subcellularLocation>
        <location evidence="2">Nucleus</location>
    </subcellularLocation>
    <subcellularLocation>
        <location evidence="2">Chromosome</location>
    </subcellularLocation>
    <text evidence="2">Associated with chromatin; colocalizes with RNA polymerase II (Pol II) on chromatin.</text>
</comment>
<reference key="1">
    <citation type="submission" date="2007-03" db="EMBL/GenBank/DDBJ databases">
        <authorList>
            <consortium name="NIH - Xenopus Gene Collection (XGC) project"/>
        </authorList>
    </citation>
    <scope>NUCLEOTIDE SEQUENCE [LARGE SCALE MRNA]</scope>
    <source>
        <tissue>Embryo</tissue>
    </source>
</reference>
<evidence type="ECO:0000250" key="1">
    <source>
        <dbReference type="UniProtKB" id="O94842"/>
    </source>
</evidence>
<evidence type="ECO:0000250" key="2">
    <source>
        <dbReference type="UniProtKB" id="Q8BU11"/>
    </source>
</evidence>
<evidence type="ECO:0000255" key="3"/>
<evidence type="ECO:0000255" key="4">
    <source>
        <dbReference type="PROSITE-ProRule" id="PRU00267"/>
    </source>
</evidence>
<evidence type="ECO:0000256" key="5">
    <source>
        <dbReference type="SAM" id="MobiDB-lite"/>
    </source>
</evidence>
<gene>
    <name type="primary">tox4</name>
</gene>
<name>TOX4_XENTR</name>
<proteinExistence type="evidence at transcript level"/>
<organism>
    <name type="scientific">Xenopus tropicalis</name>
    <name type="common">Western clawed frog</name>
    <name type="synonym">Silurana tropicalis</name>
    <dbReference type="NCBI Taxonomy" id="8364"/>
    <lineage>
        <taxon>Eukaryota</taxon>
        <taxon>Metazoa</taxon>
        <taxon>Chordata</taxon>
        <taxon>Craniata</taxon>
        <taxon>Vertebrata</taxon>
        <taxon>Euteleostomi</taxon>
        <taxon>Amphibia</taxon>
        <taxon>Batrachia</taxon>
        <taxon>Anura</taxon>
        <taxon>Pipoidea</taxon>
        <taxon>Pipidae</taxon>
        <taxon>Xenopodinae</taxon>
        <taxon>Xenopus</taxon>
        <taxon>Silurana</taxon>
    </lineage>
</organism>
<accession>A4QNP0</accession>
<sequence>MEFPGSSDNYLTITGPGHPFLTGTETFHTPSLGDEEFEIPPISLDSDPSLAVSDVVGHFDDLGDPSGVQDEGFATQYGVQTLDMPVEMTHEVMDQTGGLLGAGLAMDLDHPIVTPYSANPPVTIDVSMTDMSSGILGHSQLTTIDQSELSSQLGLSLGGGAILHPVQSPEDHLSPTPSPTSSLHDEDMEDFRRITAPKNIIVEQAKKPKTPKKKKKKDPNEPQKPLSAYALFFRDTQAAIKGQNPNATFGEVSKIVASMWDSLGEEQKQVYKRKTEAAKKEYLKALALYKANQLSQVAVDTVDLDPPAVPALLSESPVPSPSVVTATSIPECVSSPSAPSPPSQTVALPQQSIAKIIISKQILPAGQNPTSIALSQGVVTVIPATVVTSRGLPLAQLQPSPQAQRVTRSVLQAAMQMPPRLQPPPLQQMQQPPRLQQMAPAQQPSITILQSPPPLQPMQKVRLTLQQPPPLQIKIIPPPLQPQPQAVQVQNQSLSVINVSTSPEAPASPPEQLEVLPEVVQEESPPPQMDVELVSSSPPPSLSPQPRCVRSGCENAPIECKDWDNEYCSNECVVKHCRDTFMAWIAARSQGTLATVK</sequence>
<dbReference type="EMBL" id="BC135950">
    <property type="protein sequence ID" value="AAI35951.1"/>
    <property type="molecule type" value="mRNA"/>
</dbReference>
<dbReference type="RefSeq" id="NP_001090624.1">
    <property type="nucleotide sequence ID" value="NM_001097155.1"/>
</dbReference>
<dbReference type="SMR" id="A4QNP0"/>
<dbReference type="FunCoup" id="A4QNP0">
    <property type="interactions" value="3192"/>
</dbReference>
<dbReference type="STRING" id="8364.ENSXETP00000011545"/>
<dbReference type="PaxDb" id="8364-ENSXETP00000037458"/>
<dbReference type="DNASU" id="395028"/>
<dbReference type="GeneID" id="395028"/>
<dbReference type="KEGG" id="xtr:395028"/>
<dbReference type="AGR" id="Xenbase:XB-GENE-993803"/>
<dbReference type="CTD" id="9878"/>
<dbReference type="Xenbase" id="XB-GENE-993803">
    <property type="gene designation" value="tox4"/>
</dbReference>
<dbReference type="eggNOG" id="KOG0381">
    <property type="taxonomic scope" value="Eukaryota"/>
</dbReference>
<dbReference type="InParanoid" id="A4QNP0"/>
<dbReference type="OrthoDB" id="10027956at2759"/>
<dbReference type="Proteomes" id="UP000008143">
    <property type="component" value="Chromosome 1"/>
</dbReference>
<dbReference type="GO" id="GO:0005634">
    <property type="term" value="C:nucleus"/>
    <property type="evidence" value="ECO:0007669"/>
    <property type="project" value="UniProtKB-SubCell"/>
</dbReference>
<dbReference type="GO" id="GO:0072357">
    <property type="term" value="C:PTW/PP1 phosphatase complex"/>
    <property type="evidence" value="ECO:0000250"/>
    <property type="project" value="UniProtKB"/>
</dbReference>
<dbReference type="GO" id="GO:0003677">
    <property type="term" value="F:DNA binding"/>
    <property type="evidence" value="ECO:0007669"/>
    <property type="project" value="UniProtKB-KW"/>
</dbReference>
<dbReference type="GO" id="GO:0032968">
    <property type="term" value="P:positive regulation of transcription elongation by RNA polymerase II"/>
    <property type="evidence" value="ECO:0000250"/>
    <property type="project" value="UniProtKB"/>
</dbReference>
<dbReference type="GO" id="GO:0001111">
    <property type="term" value="P:RNA polymerase II promoter clearance"/>
    <property type="evidence" value="ECO:0000250"/>
    <property type="project" value="UniProtKB"/>
</dbReference>
<dbReference type="CDD" id="cd21995">
    <property type="entry name" value="HMG-box_TOX-like"/>
    <property type="match status" value="1"/>
</dbReference>
<dbReference type="FunFam" id="1.10.30.10:FF:000005">
    <property type="entry name" value="TOX high mobility group box family member 3"/>
    <property type="match status" value="1"/>
</dbReference>
<dbReference type="Gene3D" id="1.10.30.10">
    <property type="entry name" value="High mobility group box domain"/>
    <property type="match status" value="1"/>
</dbReference>
<dbReference type="InterPro" id="IPR009071">
    <property type="entry name" value="HMG_box_dom"/>
</dbReference>
<dbReference type="InterPro" id="IPR036910">
    <property type="entry name" value="HMG_box_dom_sf"/>
</dbReference>
<dbReference type="InterPro" id="IPR051365">
    <property type="entry name" value="TOX_HMG-box_domain"/>
</dbReference>
<dbReference type="PANTHER" id="PTHR45781">
    <property type="entry name" value="AGAP000281-PA"/>
    <property type="match status" value="1"/>
</dbReference>
<dbReference type="PANTHER" id="PTHR45781:SF2">
    <property type="entry name" value="TOX HIGH MOBILITY GROUP BOX FAMILY MEMBER 4"/>
    <property type="match status" value="1"/>
</dbReference>
<dbReference type="Pfam" id="PF00505">
    <property type="entry name" value="HMG_box"/>
    <property type="match status" value="1"/>
</dbReference>
<dbReference type="SMART" id="SM00398">
    <property type="entry name" value="HMG"/>
    <property type="match status" value="1"/>
</dbReference>
<dbReference type="SUPFAM" id="SSF47095">
    <property type="entry name" value="HMG-box"/>
    <property type="match status" value="1"/>
</dbReference>
<dbReference type="PROSITE" id="PS50118">
    <property type="entry name" value="HMG_BOX_2"/>
    <property type="match status" value="1"/>
</dbReference>